<proteinExistence type="evidence at protein level"/>
<gene>
    <name type="primary">Pmm1</name>
</gene>
<reference key="1">
    <citation type="submission" date="1997-06" db="EMBL/GenBank/DDBJ databases">
        <authorList>
            <person name="Janoueix-Lerosey I."/>
            <person name="Goud B."/>
        </authorList>
    </citation>
    <scope>NUCLEOTIDE SEQUENCE [MRNA]</scope>
</reference>
<reference key="2">
    <citation type="journal article" date="2006" name="Mol. Cell. Biol.">
        <title>The normal phenotype of Pmm1-deficient mice suggests that Pmm1 is not essential for normal mouse development.</title>
        <authorList>
            <person name="Cromphout K."/>
            <person name="Vleugels W."/>
            <person name="Heykants L."/>
            <person name="Schollen E."/>
            <person name="Keldermans L."/>
            <person name="Sciot R."/>
            <person name="D'Hooge R."/>
            <person name="De Deyn P.P."/>
            <person name="von Figura K."/>
            <person name="Hartmann D."/>
            <person name="Korner C."/>
            <person name="Matthijs G."/>
        </authorList>
    </citation>
    <scope>TISSUE SPECIFICITY</scope>
    <scope>DEVELOPMENTAL STAGE</scope>
    <scope>SUBCELLULAR LOCATION</scope>
    <scope>DISRUPTION PHENOTYPE</scope>
</reference>
<reference key="3">
    <citation type="journal article" date="2008" name="J. Biol. Chem.">
        <title>Mammalian phosphomannomutase PMM1 is the brain IMP-sensitive glucose-1,6-bisphosphatase.</title>
        <authorList>
            <person name="Veiga-da-Cunha M."/>
            <person name="Vleugels W."/>
            <person name="Maliekal P."/>
            <person name="Matthijs G."/>
            <person name="Van Schaftingen E."/>
        </authorList>
    </citation>
    <scope>FUNCTION</scope>
    <scope>ACTIVITY REGULATION</scope>
    <scope>BIOPHYSICOCHEMICAL PROPERTIES</scope>
</reference>
<reference key="4">
    <citation type="journal article" date="2010" name="Cell">
        <title>A tissue-specific atlas of mouse protein phosphorylation and expression.</title>
        <authorList>
            <person name="Huttlin E.L."/>
            <person name="Jedrychowski M.P."/>
            <person name="Elias J.E."/>
            <person name="Goswami T."/>
            <person name="Rad R."/>
            <person name="Beausoleil S.A."/>
            <person name="Villen J."/>
            <person name="Haas W."/>
            <person name="Sowa M.E."/>
            <person name="Gygi S.P."/>
        </authorList>
    </citation>
    <scope>PHOSPHORYLATION [LARGE SCALE ANALYSIS] AT SER-242</scope>
    <scope>IDENTIFICATION BY MASS SPECTROMETRY [LARGE SCALE ANALYSIS]</scope>
    <source>
        <tissue>Brain</tissue>
        <tissue>Lung</tissue>
        <tissue>Spleen</tissue>
        <tissue>Testis</tissue>
    </source>
</reference>
<evidence type="ECO:0000250" key="1"/>
<evidence type="ECO:0000250" key="2">
    <source>
        <dbReference type="UniProtKB" id="P31353"/>
    </source>
</evidence>
<evidence type="ECO:0000250" key="3">
    <source>
        <dbReference type="UniProtKB" id="Q92871"/>
    </source>
</evidence>
<evidence type="ECO:0000269" key="4">
    <source>
    </source>
</evidence>
<evidence type="ECO:0000269" key="5">
    <source>
    </source>
</evidence>
<evidence type="ECO:0000305" key="6"/>
<evidence type="ECO:0007744" key="7">
    <source>
    </source>
</evidence>
<comment type="function">
    <text evidence="5">Involved in the synthesis of the GDP-mannose and dolichol-phosphate-mannose required for a number of critical mannosyl transfer reactions. In addition, may be responsible for the degradation of glucose-1,6-bisphosphate in ischemic brain.</text>
</comment>
<comment type="catalytic activity">
    <reaction>
        <text>alpha-D-mannose 1-phosphate = D-mannose 6-phosphate</text>
        <dbReference type="Rhea" id="RHEA:11140"/>
        <dbReference type="ChEBI" id="CHEBI:58409"/>
        <dbReference type="ChEBI" id="CHEBI:58735"/>
        <dbReference type="EC" id="5.4.2.8"/>
    </reaction>
</comment>
<comment type="cofactor">
    <cofactor evidence="1">
        <name>Mg(2+)</name>
        <dbReference type="ChEBI" id="CHEBI:18420"/>
    </cofactor>
</comment>
<comment type="activity regulation">
    <text evidence="5">IMP, a metabolite whose concentration is elevated in anoxia, inhibits phosphomannomutase and phosphoglucomutase activities and strongly enhances glucose-1,6-bisphosphatase activity.</text>
</comment>
<comment type="biophysicochemical properties">
    <kinetics>
        <KM evidence="5">17 uM for glucose-1,6-bisphosphate in the presence of 1 uM IMP</KM>
        <KM evidence="5">40 uM for glucose-1,6-bisphosphate in the presence of 20 uM IMP</KM>
        <Vmax evidence="5">2.1 umol/min/mg enzyme with glucose-1,6-bisphosphate as substrate</Vmax>
    </kinetics>
</comment>
<comment type="pathway">
    <text>Nucleotide-sugar biosynthesis; GDP-alpha-D-mannose biosynthesis; alpha-D-mannose 1-phosphate from D-fructose 6-phosphate: step 2/2.</text>
</comment>
<comment type="subunit">
    <text evidence="1">Homodimer.</text>
</comment>
<comment type="subcellular location">
    <subcellularLocation>
        <location evidence="4">Cytoplasm</location>
    </subcellularLocation>
</comment>
<comment type="tissue specificity">
    <text evidence="4">Present in brain, where it is restricted to neuronal cell bodies. Present at lower levels in pancreas, liver, lung, gonads, uterus, adrenal glands and pituitary (at protein level). Undetectable in intestine.</text>
</comment>
<comment type="developmental stage">
    <text evidence="4">Highly expressed at 17 dpc in most organs (at protein level).</text>
</comment>
<comment type="disruption phenotype">
    <text evidence="4">Mice are viable and fertile and develop normally.</text>
</comment>
<comment type="similarity">
    <text evidence="6">Belongs to the eukaryotic PMM family.</text>
</comment>
<protein>
    <recommendedName>
        <fullName>Phosphomannomutase 1</fullName>
        <shortName>PMM 1</shortName>
        <ecNumber>5.4.2.8</ecNumber>
    </recommendedName>
</protein>
<keyword id="KW-0007">Acetylation</keyword>
<keyword id="KW-0963">Cytoplasm</keyword>
<keyword id="KW-0413">Isomerase</keyword>
<keyword id="KW-0460">Magnesium</keyword>
<keyword id="KW-0479">Metal-binding</keyword>
<keyword id="KW-0597">Phosphoprotein</keyword>
<keyword id="KW-1185">Reference proteome</keyword>
<sequence length="262" mass="29775">MAVAVEGARRKERILCLFDVDGTLTPARQKIDPEVSAFLQKLRSRVQIGVVGGSDYSKIAEQLGEGDEVIEKFDYVFAENGTVQYKHGRLLSKQTIQNHLGEELLQDLINFCLSYMALLRLPKKRGTFIEFRNGMLNVSPIGRSCTLEERIEFSELDKKEKIREKFVEALKTEFAGKGLRFSRGGMISFDVFPEGWDKRYCLDSLDEDSFDIIHFFGNETSPGGNDFEIYADPRTVGHSVVSPQDTVQRCRELFFPETAHEA</sequence>
<feature type="initiator methionine" description="Removed" evidence="3">
    <location>
        <position position="1"/>
    </location>
</feature>
<feature type="chain" id="PRO_0000199693" description="Phosphomannomutase 1">
    <location>
        <begin position="2"/>
        <end position="262"/>
    </location>
</feature>
<feature type="active site" description="Nucleophile" evidence="3">
    <location>
        <position position="19"/>
    </location>
</feature>
<feature type="active site" description="Proton donor/acceptor" evidence="3">
    <location>
        <position position="21"/>
    </location>
</feature>
<feature type="binding site" evidence="3">
    <location>
        <position position="19"/>
    </location>
    <ligand>
        <name>Mg(2+)</name>
        <dbReference type="ChEBI" id="CHEBI:18420"/>
        <label>1</label>
    </ligand>
</feature>
<feature type="binding site" evidence="3">
    <location>
        <position position="21"/>
    </location>
    <ligand>
        <name>Mg(2+)</name>
        <dbReference type="ChEBI" id="CHEBI:18420"/>
        <label>1</label>
    </ligand>
</feature>
<feature type="binding site" evidence="3">
    <location>
        <position position="28"/>
    </location>
    <ligand>
        <name>alpha-D-mannose 1-phosphate</name>
        <dbReference type="ChEBI" id="CHEBI:58409"/>
    </ligand>
</feature>
<feature type="binding site" evidence="3">
    <location>
        <position position="132"/>
    </location>
    <ligand>
        <name>alpha-D-mannose 1-phosphate</name>
        <dbReference type="ChEBI" id="CHEBI:58409"/>
    </ligand>
</feature>
<feature type="binding site" evidence="3">
    <location>
        <position position="143"/>
    </location>
    <ligand>
        <name>alpha-D-mannose 1-phosphate</name>
        <dbReference type="ChEBI" id="CHEBI:58409"/>
    </ligand>
</feature>
<feature type="binding site" evidence="3">
    <location>
        <position position="150"/>
    </location>
    <ligand>
        <name>alpha-D-mannose 1-phosphate</name>
        <dbReference type="ChEBI" id="CHEBI:58409"/>
    </ligand>
</feature>
<feature type="binding site" evidence="3">
    <location>
        <position position="186"/>
    </location>
    <ligand>
        <name>alpha-D-mannose 1-phosphate</name>
        <dbReference type="ChEBI" id="CHEBI:58409"/>
    </ligand>
</feature>
<feature type="binding site" evidence="3">
    <location>
        <position position="188"/>
    </location>
    <ligand>
        <name>alpha-D-mannose 1-phosphate</name>
        <dbReference type="ChEBI" id="CHEBI:58409"/>
    </ligand>
</feature>
<feature type="binding site" evidence="3">
    <location>
        <position position="190"/>
    </location>
    <ligand>
        <name>alpha-D-mannose 1-phosphate</name>
        <dbReference type="ChEBI" id="CHEBI:58409"/>
    </ligand>
</feature>
<feature type="binding site" evidence="3">
    <location>
        <position position="218"/>
    </location>
    <ligand>
        <name>Mg(2+)</name>
        <dbReference type="ChEBI" id="CHEBI:18420"/>
        <label>1</label>
    </ligand>
</feature>
<feature type="binding site" evidence="2">
    <location>
        <position position="230"/>
    </location>
    <ligand>
        <name>Mg(2+)</name>
        <dbReference type="ChEBI" id="CHEBI:18420"/>
        <label>2</label>
    </ligand>
</feature>
<feature type="binding site" evidence="3">
    <location>
        <position position="232"/>
    </location>
    <ligand>
        <name>Mg(2+)</name>
        <dbReference type="ChEBI" id="CHEBI:18420"/>
        <label>2</label>
    </ligand>
</feature>
<feature type="binding site" evidence="3">
    <location>
        <position position="235"/>
    </location>
    <ligand>
        <name>Mg(2+)</name>
        <dbReference type="ChEBI" id="CHEBI:18420"/>
        <label>2</label>
    </ligand>
</feature>
<feature type="modified residue" description="N-acetylalanine" evidence="3">
    <location>
        <position position="2"/>
    </location>
</feature>
<feature type="modified residue" description="Phosphoserine" evidence="7">
    <location>
        <position position="242"/>
    </location>
</feature>
<organism>
    <name type="scientific">Mus musculus</name>
    <name type="common">Mouse</name>
    <dbReference type="NCBI Taxonomy" id="10090"/>
    <lineage>
        <taxon>Eukaryota</taxon>
        <taxon>Metazoa</taxon>
        <taxon>Chordata</taxon>
        <taxon>Craniata</taxon>
        <taxon>Vertebrata</taxon>
        <taxon>Euteleostomi</taxon>
        <taxon>Mammalia</taxon>
        <taxon>Eutheria</taxon>
        <taxon>Euarchontoglires</taxon>
        <taxon>Glires</taxon>
        <taxon>Rodentia</taxon>
        <taxon>Myomorpha</taxon>
        <taxon>Muroidea</taxon>
        <taxon>Muridae</taxon>
        <taxon>Murinae</taxon>
        <taxon>Mus</taxon>
        <taxon>Mus</taxon>
    </lineage>
</organism>
<dbReference type="EC" id="5.4.2.8"/>
<dbReference type="EMBL" id="AF007267">
    <property type="protein sequence ID" value="AAB62943.1"/>
    <property type="molecule type" value="mRNA"/>
</dbReference>
<dbReference type="CCDS" id="CCDS27678.1"/>
<dbReference type="RefSeq" id="NP_038900.1">
    <property type="nucleotide sequence ID" value="NM_013872.4"/>
</dbReference>
<dbReference type="SMR" id="O35621"/>
<dbReference type="FunCoup" id="O35621">
    <property type="interactions" value="1101"/>
</dbReference>
<dbReference type="IntAct" id="O35621">
    <property type="interactions" value="2"/>
</dbReference>
<dbReference type="MINT" id="O35621"/>
<dbReference type="STRING" id="10090.ENSMUSP00000023112"/>
<dbReference type="iPTMnet" id="O35621"/>
<dbReference type="PhosphoSitePlus" id="O35621"/>
<dbReference type="PaxDb" id="10090-ENSMUSP00000023112"/>
<dbReference type="PeptideAtlas" id="O35621"/>
<dbReference type="ProteomicsDB" id="289551"/>
<dbReference type="Pumba" id="O35621"/>
<dbReference type="Antibodypedia" id="26980">
    <property type="antibodies" value="92 antibodies from 20 providers"/>
</dbReference>
<dbReference type="DNASU" id="29858"/>
<dbReference type="Ensembl" id="ENSMUST00000023112.12">
    <property type="protein sequence ID" value="ENSMUSP00000023112.6"/>
    <property type="gene ID" value="ENSMUSG00000022474.16"/>
</dbReference>
<dbReference type="GeneID" id="29858"/>
<dbReference type="KEGG" id="mmu:29858"/>
<dbReference type="UCSC" id="uc007wxt.3">
    <property type="organism name" value="mouse"/>
</dbReference>
<dbReference type="AGR" id="MGI:1353418"/>
<dbReference type="CTD" id="5372"/>
<dbReference type="MGI" id="MGI:1353418">
    <property type="gene designation" value="Pmm1"/>
</dbReference>
<dbReference type="VEuPathDB" id="HostDB:ENSMUSG00000022474"/>
<dbReference type="eggNOG" id="KOG3189">
    <property type="taxonomic scope" value="Eukaryota"/>
</dbReference>
<dbReference type="GeneTree" id="ENSGT00390000002918"/>
<dbReference type="HOGENOM" id="CLU_065642_0_1_1"/>
<dbReference type="InParanoid" id="O35621"/>
<dbReference type="OMA" id="FCLHYMA"/>
<dbReference type="OrthoDB" id="10264771at2759"/>
<dbReference type="PhylomeDB" id="O35621"/>
<dbReference type="TreeFam" id="TF300874"/>
<dbReference type="Reactome" id="R-MMU-446205">
    <property type="pathway name" value="Synthesis of GDP-mannose"/>
</dbReference>
<dbReference type="SABIO-RK" id="O35621"/>
<dbReference type="UniPathway" id="UPA00126">
    <property type="reaction ID" value="UER00424"/>
</dbReference>
<dbReference type="BioGRID-ORCS" id="29858">
    <property type="hits" value="2 hits in 77 CRISPR screens"/>
</dbReference>
<dbReference type="ChiTaRS" id="Pmm1">
    <property type="organism name" value="mouse"/>
</dbReference>
<dbReference type="PRO" id="PR:O35621"/>
<dbReference type="Proteomes" id="UP000000589">
    <property type="component" value="Chromosome 15"/>
</dbReference>
<dbReference type="RNAct" id="O35621">
    <property type="molecule type" value="protein"/>
</dbReference>
<dbReference type="Bgee" id="ENSMUSG00000022474">
    <property type="expression patterns" value="Expressed in morula and 257 other cell types or tissues"/>
</dbReference>
<dbReference type="ExpressionAtlas" id="O35621">
    <property type="expression patterns" value="baseline and differential"/>
</dbReference>
<dbReference type="GO" id="GO:0005737">
    <property type="term" value="C:cytoplasm"/>
    <property type="evidence" value="ECO:0000314"/>
    <property type="project" value="MGI"/>
</dbReference>
<dbReference type="GO" id="GO:0005829">
    <property type="term" value="C:cytosol"/>
    <property type="evidence" value="ECO:0007669"/>
    <property type="project" value="Ensembl"/>
</dbReference>
<dbReference type="GO" id="GO:0043025">
    <property type="term" value="C:neuronal cell body"/>
    <property type="evidence" value="ECO:0000314"/>
    <property type="project" value="MGI"/>
</dbReference>
<dbReference type="GO" id="GO:0046872">
    <property type="term" value="F:metal ion binding"/>
    <property type="evidence" value="ECO:0007669"/>
    <property type="project" value="UniProtKB-KW"/>
</dbReference>
<dbReference type="GO" id="GO:0004615">
    <property type="term" value="F:phosphomannomutase activity"/>
    <property type="evidence" value="ECO:0000250"/>
    <property type="project" value="UniProtKB"/>
</dbReference>
<dbReference type="GO" id="GO:1990830">
    <property type="term" value="P:cellular response to leukemia inhibitory factor"/>
    <property type="evidence" value="ECO:0000270"/>
    <property type="project" value="MGI"/>
</dbReference>
<dbReference type="GO" id="GO:0009298">
    <property type="term" value="P:GDP-mannose biosynthetic process"/>
    <property type="evidence" value="ECO:0007669"/>
    <property type="project" value="UniProtKB-UniPathway"/>
</dbReference>
<dbReference type="GO" id="GO:0006013">
    <property type="term" value="P:mannose metabolic process"/>
    <property type="evidence" value="ECO:0000250"/>
    <property type="project" value="UniProtKB"/>
</dbReference>
<dbReference type="CDD" id="cd02585">
    <property type="entry name" value="HAD_PMM"/>
    <property type="match status" value="1"/>
</dbReference>
<dbReference type="FunFam" id="3.30.1240.20:FF:000001">
    <property type="entry name" value="Phosphomannomutase"/>
    <property type="match status" value="1"/>
</dbReference>
<dbReference type="Gene3D" id="3.30.1240.20">
    <property type="match status" value="1"/>
</dbReference>
<dbReference type="Gene3D" id="3.40.50.1000">
    <property type="entry name" value="HAD superfamily/HAD-like"/>
    <property type="match status" value="1"/>
</dbReference>
<dbReference type="InterPro" id="IPR036412">
    <property type="entry name" value="HAD-like_sf"/>
</dbReference>
<dbReference type="InterPro" id="IPR006379">
    <property type="entry name" value="HAD-SF_hydro_IIB"/>
</dbReference>
<dbReference type="InterPro" id="IPR023214">
    <property type="entry name" value="HAD_sf"/>
</dbReference>
<dbReference type="InterPro" id="IPR005002">
    <property type="entry name" value="PMM"/>
</dbReference>
<dbReference type="InterPro" id="IPR043169">
    <property type="entry name" value="PMM_cap"/>
</dbReference>
<dbReference type="NCBIfam" id="TIGR01484">
    <property type="entry name" value="HAD-SF-IIB"/>
    <property type="match status" value="1"/>
</dbReference>
<dbReference type="PANTHER" id="PTHR10466">
    <property type="entry name" value="PHOSPHOMANNOMUTASE"/>
    <property type="match status" value="1"/>
</dbReference>
<dbReference type="PANTHER" id="PTHR10466:SF1">
    <property type="entry name" value="PHOSPHOMANNOMUTASE 1"/>
    <property type="match status" value="1"/>
</dbReference>
<dbReference type="Pfam" id="PF03332">
    <property type="entry name" value="PMM"/>
    <property type="match status" value="1"/>
</dbReference>
<dbReference type="SFLD" id="SFLDF00445">
    <property type="entry name" value="alpha-phosphomannomutase"/>
    <property type="match status" value="1"/>
</dbReference>
<dbReference type="SFLD" id="SFLDG01140">
    <property type="entry name" value="C2.B:_Phosphomannomutase_and_P"/>
    <property type="match status" value="1"/>
</dbReference>
<dbReference type="SUPFAM" id="SSF56784">
    <property type="entry name" value="HAD-like"/>
    <property type="match status" value="1"/>
</dbReference>
<name>PMM1_MOUSE</name>
<accession>O35621</accession>